<keyword id="KW-0903">Direct protein sequencing</keyword>
<proteinExistence type="evidence at protein level"/>
<organism>
    <name type="scientific">Streptococcus thermophilus</name>
    <dbReference type="NCBI Taxonomy" id="1308"/>
    <lineage>
        <taxon>Bacteria</taxon>
        <taxon>Bacillati</taxon>
        <taxon>Bacillota</taxon>
        <taxon>Bacilli</taxon>
        <taxon>Lactobacillales</taxon>
        <taxon>Streptococcaceae</taxon>
        <taxon>Streptococcus</taxon>
    </lineage>
</organism>
<reference evidence="3" key="1">
    <citation type="journal article" date="2002" name="Lait">
        <title>Comparative study of the protein composition of three strains of Streptococcus thermophilus grown either in M17 medium or in milk.</title>
        <authorList>
            <person name="Guimont C."/>
            <person name="Chopard M.-A."/>
            <person name="Gaillard J.-L."/>
            <person name="Chamba J.-F."/>
        </authorList>
    </citation>
    <scope>PROTEIN SEQUENCE</scope>
    <source>
        <strain evidence="1">ITGST80</strain>
    </source>
</reference>
<accession>P83331</accession>
<protein>
    <recommendedName>
        <fullName>Putative penicillin-binding protein</fullName>
        <shortName>PBP</shortName>
    </recommendedName>
</protein>
<feature type="chain" id="PRO_0000273263" description="Putative penicillin-binding protein">
    <location>
        <begin position="1" status="less than"/>
        <end position="15" status="greater than"/>
    </location>
</feature>
<feature type="non-terminal residue" evidence="2">
    <location>
        <position position="1"/>
    </location>
</feature>
<feature type="non-terminal residue" evidence="2">
    <location>
        <position position="15"/>
    </location>
</feature>
<evidence type="ECO:0000269" key="1">
    <source ref="1"/>
</evidence>
<evidence type="ECO:0000303" key="2">
    <source ref="1"/>
</evidence>
<evidence type="ECO:0000305" key="3"/>
<comment type="similarity">
    <text evidence="3">Belongs to the transpeptidase family.</text>
</comment>
<sequence length="15" mass="1653">VNSTYIGYAPIDDPK</sequence>
<name>PBP_STRTR</name>